<proteinExistence type="inferred from homology"/>
<dbReference type="EMBL" id="AY241901">
    <property type="protein sequence ID" value="AAP73021.1"/>
    <property type="molecule type" value="Genomic_DNA"/>
</dbReference>
<dbReference type="GO" id="GO:0005743">
    <property type="term" value="C:mitochondrial inner membrane"/>
    <property type="evidence" value="ECO:0007669"/>
    <property type="project" value="UniProtKB-SubCell"/>
</dbReference>
<dbReference type="GO" id="GO:0045275">
    <property type="term" value="C:respiratory chain complex III"/>
    <property type="evidence" value="ECO:0007669"/>
    <property type="project" value="InterPro"/>
</dbReference>
<dbReference type="GO" id="GO:0046872">
    <property type="term" value="F:metal ion binding"/>
    <property type="evidence" value="ECO:0007669"/>
    <property type="project" value="UniProtKB-KW"/>
</dbReference>
<dbReference type="GO" id="GO:0008121">
    <property type="term" value="F:ubiquinol-cytochrome-c reductase activity"/>
    <property type="evidence" value="ECO:0007669"/>
    <property type="project" value="InterPro"/>
</dbReference>
<dbReference type="GO" id="GO:0006122">
    <property type="term" value="P:mitochondrial electron transport, ubiquinol to cytochrome c"/>
    <property type="evidence" value="ECO:0007669"/>
    <property type="project" value="TreeGrafter"/>
</dbReference>
<dbReference type="CDD" id="cd00290">
    <property type="entry name" value="cytochrome_b_C"/>
    <property type="match status" value="1"/>
</dbReference>
<dbReference type="CDD" id="cd00284">
    <property type="entry name" value="Cytochrome_b_N"/>
    <property type="match status" value="1"/>
</dbReference>
<dbReference type="FunFam" id="1.20.810.10:FF:000002">
    <property type="entry name" value="Cytochrome b"/>
    <property type="match status" value="1"/>
</dbReference>
<dbReference type="Gene3D" id="1.20.810.10">
    <property type="entry name" value="Cytochrome Bc1 Complex, Chain C"/>
    <property type="match status" value="1"/>
</dbReference>
<dbReference type="InterPro" id="IPR005798">
    <property type="entry name" value="Cyt_b/b6_C"/>
</dbReference>
<dbReference type="InterPro" id="IPR036150">
    <property type="entry name" value="Cyt_b/b6_C_sf"/>
</dbReference>
<dbReference type="InterPro" id="IPR005797">
    <property type="entry name" value="Cyt_b/b6_N"/>
</dbReference>
<dbReference type="InterPro" id="IPR027387">
    <property type="entry name" value="Cytb/b6-like_sf"/>
</dbReference>
<dbReference type="InterPro" id="IPR030689">
    <property type="entry name" value="Cytochrome_b"/>
</dbReference>
<dbReference type="InterPro" id="IPR048260">
    <property type="entry name" value="Cytochrome_b_C_euk/bac"/>
</dbReference>
<dbReference type="InterPro" id="IPR048259">
    <property type="entry name" value="Cytochrome_b_N_euk/bac"/>
</dbReference>
<dbReference type="InterPro" id="IPR016174">
    <property type="entry name" value="Di-haem_cyt_TM"/>
</dbReference>
<dbReference type="PANTHER" id="PTHR19271">
    <property type="entry name" value="CYTOCHROME B"/>
    <property type="match status" value="1"/>
</dbReference>
<dbReference type="PANTHER" id="PTHR19271:SF16">
    <property type="entry name" value="CYTOCHROME B"/>
    <property type="match status" value="1"/>
</dbReference>
<dbReference type="Pfam" id="PF00032">
    <property type="entry name" value="Cytochrom_B_C"/>
    <property type="match status" value="1"/>
</dbReference>
<dbReference type="Pfam" id="PF00033">
    <property type="entry name" value="Cytochrome_B"/>
    <property type="match status" value="1"/>
</dbReference>
<dbReference type="PIRSF" id="PIRSF038885">
    <property type="entry name" value="COB"/>
    <property type="match status" value="1"/>
</dbReference>
<dbReference type="SUPFAM" id="SSF81648">
    <property type="entry name" value="a domain/subunit of cytochrome bc1 complex (Ubiquinol-cytochrome c reductase)"/>
    <property type="match status" value="1"/>
</dbReference>
<dbReference type="SUPFAM" id="SSF81342">
    <property type="entry name" value="Transmembrane di-heme cytochromes"/>
    <property type="match status" value="1"/>
</dbReference>
<dbReference type="PROSITE" id="PS51003">
    <property type="entry name" value="CYTB_CTER"/>
    <property type="match status" value="1"/>
</dbReference>
<dbReference type="PROSITE" id="PS51002">
    <property type="entry name" value="CYTB_NTER"/>
    <property type="match status" value="1"/>
</dbReference>
<accession>Q6XBV6</accession>
<geneLocation type="mitochondrion"/>
<evidence type="ECO:0000250" key="1"/>
<evidence type="ECO:0000250" key="2">
    <source>
        <dbReference type="UniProtKB" id="P00157"/>
    </source>
</evidence>
<evidence type="ECO:0000255" key="3">
    <source>
        <dbReference type="PROSITE-ProRule" id="PRU00967"/>
    </source>
</evidence>
<evidence type="ECO:0000255" key="4">
    <source>
        <dbReference type="PROSITE-ProRule" id="PRU00968"/>
    </source>
</evidence>
<organism>
    <name type="scientific">Genetta maculata</name>
    <name type="common">Panther genet</name>
    <dbReference type="NCBI Taxonomy" id="205595"/>
    <lineage>
        <taxon>Eukaryota</taxon>
        <taxon>Metazoa</taxon>
        <taxon>Chordata</taxon>
        <taxon>Craniata</taxon>
        <taxon>Vertebrata</taxon>
        <taxon>Euteleostomi</taxon>
        <taxon>Mammalia</taxon>
        <taxon>Eutheria</taxon>
        <taxon>Laurasiatheria</taxon>
        <taxon>Carnivora</taxon>
        <taxon>Feliformia</taxon>
        <taxon>Viverridae</taxon>
        <taxon>Viverrinae</taxon>
        <taxon>Genetta</taxon>
    </lineage>
</organism>
<name>CYB_GENMA</name>
<comment type="function">
    <text evidence="2">Component of the ubiquinol-cytochrome c reductase complex (complex III or cytochrome b-c1 complex) that is part of the mitochondrial respiratory chain. The b-c1 complex mediates electron transfer from ubiquinol to cytochrome c. Contributes to the generation of a proton gradient across the mitochondrial membrane that is then used for ATP synthesis.</text>
</comment>
<comment type="cofactor">
    <cofactor evidence="2">
        <name>heme b</name>
        <dbReference type="ChEBI" id="CHEBI:60344"/>
    </cofactor>
    <text evidence="2">Binds 2 heme b groups non-covalently.</text>
</comment>
<comment type="subunit">
    <text evidence="2">The cytochrome bc1 complex contains 11 subunits: 3 respiratory subunits (MT-CYB, CYC1 and UQCRFS1), 2 core proteins (UQCRC1 and UQCRC2) and 6 low-molecular weight proteins (UQCRH/QCR6, UQCRB/QCR7, UQCRQ/QCR8, UQCR10/QCR9, UQCR11/QCR10 and a cleavage product of UQCRFS1). This cytochrome bc1 complex then forms a dimer.</text>
</comment>
<comment type="subcellular location">
    <subcellularLocation>
        <location evidence="2">Mitochondrion inner membrane</location>
        <topology evidence="2">Multi-pass membrane protein</topology>
    </subcellularLocation>
</comment>
<comment type="miscellaneous">
    <text evidence="1">Heme 1 (or BL or b562) is low-potential and absorbs at about 562 nm, and heme 2 (or BH or b566) is high-potential and absorbs at about 566 nm.</text>
</comment>
<comment type="similarity">
    <text evidence="3 4">Belongs to the cytochrome b family.</text>
</comment>
<comment type="caution">
    <text evidence="2">The full-length protein contains only eight transmembrane helices, not nine as predicted by bioinformatics tools.</text>
</comment>
<sequence length="379" mass="42654">MTNIRKSHPLAKIINESFIDLPAPSNISAWWNFGSLLGVCLIIQILTGLFLAMHYTSDTMTAFSSVTHICRDVNYGWIIRYIHANGASMFFICLFMHVGRGVYYGSFTFTETWNIGILLMFTVMATAFMGYVLPWGQMSFWGATVITNLLSAIPYIGTNLVEWIWGGFSVDKATLTRFFAFHFILPFIISALAAVHLLFLHETGSNNPSGVVXDSDKIPFHPYYTIKDILGLLLLTLVLMLLVLFSPDLLGDPDNYIPANPLNTPPHIKPEWYFLFAYAILRSIPNKLGGVLALVLSILILAIVPLLHTSKQRSMMFRPLSQCLFWLLVADLLTLTWIGGQPVEHPFITIGQLASILYFSIFLILMPISGIIENRLLKW</sequence>
<gene>
    <name type="primary">MT-CYB</name>
    <name type="synonym">COB</name>
    <name type="synonym">CYTB</name>
    <name type="synonym">MTCYB</name>
</gene>
<reference key="1">
    <citation type="journal article" date="2004" name="Biol. J. Linn. Soc. Lond.">
        <title>Genets (Carnivora, Viverridae) in Africa: an evolutionary synthesis based on cytochrome b sequences and morphological characters.</title>
        <authorList>
            <person name="Gaubert P."/>
            <person name="Fernandes C.A."/>
            <person name="Bruford M.W."/>
            <person name="Veron G."/>
        </authorList>
    </citation>
    <scope>NUCLEOTIDE SEQUENCE [GENOMIC DNA]</scope>
</reference>
<protein>
    <recommendedName>
        <fullName>Cytochrome b</fullName>
    </recommendedName>
    <alternativeName>
        <fullName>Complex III subunit 3</fullName>
    </alternativeName>
    <alternativeName>
        <fullName>Complex III subunit III</fullName>
    </alternativeName>
    <alternativeName>
        <fullName>Cytochrome b-c1 complex subunit 3</fullName>
    </alternativeName>
    <alternativeName>
        <fullName>Ubiquinol-cytochrome-c reductase complex cytochrome b subunit</fullName>
    </alternativeName>
</protein>
<keyword id="KW-0249">Electron transport</keyword>
<keyword id="KW-0349">Heme</keyword>
<keyword id="KW-0408">Iron</keyword>
<keyword id="KW-0472">Membrane</keyword>
<keyword id="KW-0479">Metal-binding</keyword>
<keyword id="KW-0496">Mitochondrion</keyword>
<keyword id="KW-0999">Mitochondrion inner membrane</keyword>
<keyword id="KW-0679">Respiratory chain</keyword>
<keyword id="KW-0812">Transmembrane</keyword>
<keyword id="KW-1133">Transmembrane helix</keyword>
<keyword id="KW-0813">Transport</keyword>
<keyword id="KW-0830">Ubiquinone</keyword>
<feature type="chain" id="PRO_0000247329" description="Cytochrome b">
    <location>
        <begin position="1"/>
        <end position="379"/>
    </location>
</feature>
<feature type="transmembrane region" description="Helical" evidence="2">
    <location>
        <begin position="33"/>
        <end position="53"/>
    </location>
</feature>
<feature type="transmembrane region" description="Helical" evidence="2">
    <location>
        <begin position="77"/>
        <end position="98"/>
    </location>
</feature>
<feature type="transmembrane region" description="Helical" evidence="2">
    <location>
        <begin position="113"/>
        <end position="133"/>
    </location>
</feature>
<feature type="transmembrane region" description="Helical" evidence="2">
    <location>
        <begin position="178"/>
        <end position="198"/>
    </location>
</feature>
<feature type="transmembrane region" description="Helical" evidence="2">
    <location>
        <begin position="226"/>
        <end position="246"/>
    </location>
</feature>
<feature type="transmembrane region" description="Helical" evidence="2">
    <location>
        <begin position="288"/>
        <end position="308"/>
    </location>
</feature>
<feature type="transmembrane region" description="Helical" evidence="2">
    <location>
        <begin position="320"/>
        <end position="340"/>
    </location>
</feature>
<feature type="transmembrane region" description="Helical" evidence="2">
    <location>
        <begin position="347"/>
        <end position="367"/>
    </location>
</feature>
<feature type="binding site" description="axial binding residue" evidence="2">
    <location>
        <position position="83"/>
    </location>
    <ligand>
        <name>heme b</name>
        <dbReference type="ChEBI" id="CHEBI:60344"/>
        <label>b562</label>
    </ligand>
    <ligandPart>
        <name>Fe</name>
        <dbReference type="ChEBI" id="CHEBI:18248"/>
    </ligandPart>
</feature>
<feature type="binding site" description="axial binding residue" evidence="2">
    <location>
        <position position="97"/>
    </location>
    <ligand>
        <name>heme b</name>
        <dbReference type="ChEBI" id="CHEBI:60344"/>
        <label>b566</label>
    </ligand>
    <ligandPart>
        <name>Fe</name>
        <dbReference type="ChEBI" id="CHEBI:18248"/>
    </ligandPart>
</feature>
<feature type="binding site" description="axial binding residue" evidence="2">
    <location>
        <position position="182"/>
    </location>
    <ligand>
        <name>heme b</name>
        <dbReference type="ChEBI" id="CHEBI:60344"/>
        <label>b562</label>
    </ligand>
    <ligandPart>
        <name>Fe</name>
        <dbReference type="ChEBI" id="CHEBI:18248"/>
    </ligandPart>
</feature>
<feature type="binding site" description="axial binding residue" evidence="2">
    <location>
        <position position="196"/>
    </location>
    <ligand>
        <name>heme b</name>
        <dbReference type="ChEBI" id="CHEBI:60344"/>
        <label>b566</label>
    </ligand>
    <ligandPart>
        <name>Fe</name>
        <dbReference type="ChEBI" id="CHEBI:18248"/>
    </ligandPart>
</feature>
<feature type="binding site" evidence="2">
    <location>
        <position position="201"/>
    </location>
    <ligand>
        <name>a ubiquinone</name>
        <dbReference type="ChEBI" id="CHEBI:16389"/>
    </ligand>
</feature>